<accession>C0ZIH4</accession>
<evidence type="ECO:0000255" key="1">
    <source>
        <dbReference type="HAMAP-Rule" id="MF_00480"/>
    </source>
</evidence>
<evidence type="ECO:0000305" key="2"/>
<proteinExistence type="inferred from homology"/>
<feature type="chain" id="PRO_1000135584" description="Small ribosomal subunit protein uS7">
    <location>
        <begin position="1"/>
        <end position="156"/>
    </location>
</feature>
<keyword id="KW-1185">Reference proteome</keyword>
<keyword id="KW-0687">Ribonucleoprotein</keyword>
<keyword id="KW-0689">Ribosomal protein</keyword>
<keyword id="KW-0694">RNA-binding</keyword>
<keyword id="KW-0699">rRNA-binding</keyword>
<keyword id="KW-0820">tRNA-binding</keyword>
<comment type="function">
    <text evidence="1">One of the primary rRNA binding proteins, it binds directly to 16S rRNA where it nucleates assembly of the head domain of the 30S subunit. Is located at the subunit interface close to the decoding center, probably blocks exit of the E-site tRNA.</text>
</comment>
<comment type="subunit">
    <text evidence="1">Part of the 30S ribosomal subunit. Contacts proteins S9 and S11.</text>
</comment>
<comment type="similarity">
    <text evidence="1">Belongs to the universal ribosomal protein uS7 family.</text>
</comment>
<gene>
    <name evidence="1" type="primary">rpsG</name>
    <name type="ordered locus">BBR47_02150</name>
</gene>
<reference key="1">
    <citation type="submission" date="2005-03" db="EMBL/GenBank/DDBJ databases">
        <title>Brevibacillus brevis strain 47, complete genome.</title>
        <authorList>
            <person name="Hosoyama A."/>
            <person name="Yamada R."/>
            <person name="Hongo Y."/>
            <person name="Terui Y."/>
            <person name="Ankai A."/>
            <person name="Masuyama W."/>
            <person name="Sekiguchi M."/>
            <person name="Takeda T."/>
            <person name="Asano K."/>
            <person name="Ohji S."/>
            <person name="Ichikawa N."/>
            <person name="Narita S."/>
            <person name="Aoki N."/>
            <person name="Miura H."/>
            <person name="Matsushita S."/>
            <person name="Sekigawa T."/>
            <person name="Yamagata H."/>
            <person name="Yoshikawa H."/>
            <person name="Udaka S."/>
            <person name="Tanikawa S."/>
            <person name="Fujita N."/>
        </authorList>
    </citation>
    <scope>NUCLEOTIDE SEQUENCE [LARGE SCALE GENOMIC DNA]</scope>
    <source>
        <strain>47 / JCM 6285 / NBRC 100599</strain>
    </source>
</reference>
<organism>
    <name type="scientific">Brevibacillus brevis (strain 47 / JCM 6285 / NBRC 100599)</name>
    <dbReference type="NCBI Taxonomy" id="358681"/>
    <lineage>
        <taxon>Bacteria</taxon>
        <taxon>Bacillati</taxon>
        <taxon>Bacillota</taxon>
        <taxon>Bacilli</taxon>
        <taxon>Bacillales</taxon>
        <taxon>Paenibacillaceae</taxon>
        <taxon>Brevibacillus</taxon>
    </lineage>
</organism>
<sequence length="156" mass="17997">MPRKGPVTRRDVLPDPIHNSKLVTRLINRLMLDGKRGVAQNILYNAFDIIQERTGRNPMEVFEEALKNVMPVLEVKARRVGGANYQVPIEVKPERRTTLGLRWMVNYSRNRGEKTMEQRLANEIMDAANNTGAAVKKREDTHKMAEANKAFAHYRW</sequence>
<protein>
    <recommendedName>
        <fullName evidence="1">Small ribosomal subunit protein uS7</fullName>
    </recommendedName>
    <alternativeName>
        <fullName evidence="2">30S ribosomal protein S7</fullName>
    </alternativeName>
</protein>
<dbReference type="EMBL" id="AP008955">
    <property type="protein sequence ID" value="BAH41192.1"/>
    <property type="molecule type" value="Genomic_DNA"/>
</dbReference>
<dbReference type="RefSeq" id="WP_007716226.1">
    <property type="nucleotide sequence ID" value="NC_012491.1"/>
</dbReference>
<dbReference type="SMR" id="C0ZIH4"/>
<dbReference type="STRING" id="358681.BBR47_02150"/>
<dbReference type="GeneID" id="95752121"/>
<dbReference type="KEGG" id="bbe:BBR47_02150"/>
<dbReference type="eggNOG" id="COG0049">
    <property type="taxonomic scope" value="Bacteria"/>
</dbReference>
<dbReference type="HOGENOM" id="CLU_072226_1_1_9"/>
<dbReference type="Proteomes" id="UP000001877">
    <property type="component" value="Chromosome"/>
</dbReference>
<dbReference type="GO" id="GO:0015935">
    <property type="term" value="C:small ribosomal subunit"/>
    <property type="evidence" value="ECO:0007669"/>
    <property type="project" value="InterPro"/>
</dbReference>
<dbReference type="GO" id="GO:0019843">
    <property type="term" value="F:rRNA binding"/>
    <property type="evidence" value="ECO:0007669"/>
    <property type="project" value="UniProtKB-UniRule"/>
</dbReference>
<dbReference type="GO" id="GO:0003735">
    <property type="term" value="F:structural constituent of ribosome"/>
    <property type="evidence" value="ECO:0007669"/>
    <property type="project" value="InterPro"/>
</dbReference>
<dbReference type="GO" id="GO:0000049">
    <property type="term" value="F:tRNA binding"/>
    <property type="evidence" value="ECO:0007669"/>
    <property type="project" value="UniProtKB-UniRule"/>
</dbReference>
<dbReference type="GO" id="GO:0006412">
    <property type="term" value="P:translation"/>
    <property type="evidence" value="ECO:0007669"/>
    <property type="project" value="UniProtKB-UniRule"/>
</dbReference>
<dbReference type="CDD" id="cd14869">
    <property type="entry name" value="uS7_Bacteria"/>
    <property type="match status" value="1"/>
</dbReference>
<dbReference type="FunFam" id="1.10.455.10:FF:000001">
    <property type="entry name" value="30S ribosomal protein S7"/>
    <property type="match status" value="1"/>
</dbReference>
<dbReference type="Gene3D" id="1.10.455.10">
    <property type="entry name" value="Ribosomal protein S7 domain"/>
    <property type="match status" value="1"/>
</dbReference>
<dbReference type="HAMAP" id="MF_00480_B">
    <property type="entry name" value="Ribosomal_uS7_B"/>
    <property type="match status" value="1"/>
</dbReference>
<dbReference type="InterPro" id="IPR000235">
    <property type="entry name" value="Ribosomal_uS7"/>
</dbReference>
<dbReference type="InterPro" id="IPR005717">
    <property type="entry name" value="Ribosomal_uS7_bac/org-type"/>
</dbReference>
<dbReference type="InterPro" id="IPR020606">
    <property type="entry name" value="Ribosomal_uS7_CS"/>
</dbReference>
<dbReference type="InterPro" id="IPR023798">
    <property type="entry name" value="Ribosomal_uS7_dom"/>
</dbReference>
<dbReference type="InterPro" id="IPR036823">
    <property type="entry name" value="Ribosomal_uS7_dom_sf"/>
</dbReference>
<dbReference type="NCBIfam" id="TIGR01029">
    <property type="entry name" value="rpsG_bact"/>
    <property type="match status" value="1"/>
</dbReference>
<dbReference type="PANTHER" id="PTHR11205">
    <property type="entry name" value="RIBOSOMAL PROTEIN S7"/>
    <property type="match status" value="1"/>
</dbReference>
<dbReference type="Pfam" id="PF00177">
    <property type="entry name" value="Ribosomal_S7"/>
    <property type="match status" value="1"/>
</dbReference>
<dbReference type="PIRSF" id="PIRSF002122">
    <property type="entry name" value="RPS7p_RPS7a_RPS5e_RPS7o"/>
    <property type="match status" value="1"/>
</dbReference>
<dbReference type="SUPFAM" id="SSF47973">
    <property type="entry name" value="Ribosomal protein S7"/>
    <property type="match status" value="1"/>
</dbReference>
<dbReference type="PROSITE" id="PS00052">
    <property type="entry name" value="RIBOSOMAL_S7"/>
    <property type="match status" value="1"/>
</dbReference>
<name>RS7_BREBN</name>